<proteinExistence type="inferred from homology"/>
<reference key="1">
    <citation type="journal article" date="2006" name="J. Bacteriol.">
        <title>Pathogenomic sequence analysis of Bacillus cereus and Bacillus thuringiensis isolates closely related to Bacillus anthracis.</title>
        <authorList>
            <person name="Han C.S."/>
            <person name="Xie G."/>
            <person name="Challacombe J.F."/>
            <person name="Altherr M.R."/>
            <person name="Bhotika S.S."/>
            <person name="Bruce D."/>
            <person name="Campbell C.S."/>
            <person name="Campbell M.L."/>
            <person name="Chen J."/>
            <person name="Chertkov O."/>
            <person name="Cleland C."/>
            <person name="Dimitrijevic M."/>
            <person name="Doggett N.A."/>
            <person name="Fawcett J.J."/>
            <person name="Glavina T."/>
            <person name="Goodwin L.A."/>
            <person name="Hill K.K."/>
            <person name="Hitchcock P."/>
            <person name="Jackson P.J."/>
            <person name="Keim P."/>
            <person name="Kewalramani A.R."/>
            <person name="Longmire J."/>
            <person name="Lucas S."/>
            <person name="Malfatti S."/>
            <person name="McMurry K."/>
            <person name="Meincke L.J."/>
            <person name="Misra M."/>
            <person name="Moseman B.L."/>
            <person name="Mundt M."/>
            <person name="Munk A.C."/>
            <person name="Okinaka R.T."/>
            <person name="Parson-Quintana B."/>
            <person name="Reilly L.P."/>
            <person name="Richardson P."/>
            <person name="Robinson D.L."/>
            <person name="Rubin E."/>
            <person name="Saunders E."/>
            <person name="Tapia R."/>
            <person name="Tesmer J.G."/>
            <person name="Thayer N."/>
            <person name="Thompson L.S."/>
            <person name="Tice H."/>
            <person name="Ticknor L.O."/>
            <person name="Wills P.L."/>
            <person name="Brettin T.S."/>
            <person name="Gilna P."/>
        </authorList>
    </citation>
    <scope>NUCLEOTIDE SEQUENCE [LARGE SCALE GENOMIC DNA]</scope>
    <source>
        <strain>97-27</strain>
    </source>
</reference>
<dbReference type="EMBL" id="AE017355">
    <property type="protein sequence ID" value="AAT58996.1"/>
    <property type="molecule type" value="Genomic_DNA"/>
</dbReference>
<dbReference type="RefSeq" id="YP_034690.1">
    <property type="nucleotide sequence ID" value="NC_005957.1"/>
</dbReference>
<dbReference type="SMR" id="Q6HP30"/>
<dbReference type="KEGG" id="btk:BT9727_0340"/>
<dbReference type="PATRIC" id="fig|281309.8.peg.362"/>
<dbReference type="HOGENOM" id="CLU_097103_3_0_9"/>
<dbReference type="UniPathway" id="UPA00254"/>
<dbReference type="Proteomes" id="UP000001301">
    <property type="component" value="Chromosome"/>
</dbReference>
<dbReference type="GO" id="GO:0005737">
    <property type="term" value="C:cytoplasm"/>
    <property type="evidence" value="ECO:0007669"/>
    <property type="project" value="UniProtKB-SubCell"/>
</dbReference>
<dbReference type="GO" id="GO:0034618">
    <property type="term" value="F:arginine binding"/>
    <property type="evidence" value="ECO:0007669"/>
    <property type="project" value="InterPro"/>
</dbReference>
<dbReference type="GO" id="GO:0003677">
    <property type="term" value="F:DNA binding"/>
    <property type="evidence" value="ECO:0007669"/>
    <property type="project" value="UniProtKB-KW"/>
</dbReference>
<dbReference type="GO" id="GO:0003700">
    <property type="term" value="F:DNA-binding transcription factor activity"/>
    <property type="evidence" value="ECO:0007669"/>
    <property type="project" value="UniProtKB-UniRule"/>
</dbReference>
<dbReference type="GO" id="GO:0019547">
    <property type="term" value="P:arginine catabolic process to ornithine"/>
    <property type="evidence" value="ECO:0007669"/>
    <property type="project" value="UniProtKB-UniPathway"/>
</dbReference>
<dbReference type="GO" id="GO:0051259">
    <property type="term" value="P:protein complex oligomerization"/>
    <property type="evidence" value="ECO:0007669"/>
    <property type="project" value="InterPro"/>
</dbReference>
<dbReference type="GO" id="GO:1900079">
    <property type="term" value="P:regulation of arginine biosynthetic process"/>
    <property type="evidence" value="ECO:0007669"/>
    <property type="project" value="UniProtKB-UniRule"/>
</dbReference>
<dbReference type="Gene3D" id="3.30.1360.40">
    <property type="match status" value="1"/>
</dbReference>
<dbReference type="Gene3D" id="1.10.10.10">
    <property type="entry name" value="Winged helix-like DNA-binding domain superfamily/Winged helix DNA-binding domain"/>
    <property type="match status" value="1"/>
</dbReference>
<dbReference type="HAMAP" id="MF_00173">
    <property type="entry name" value="Arg_repressor"/>
    <property type="match status" value="1"/>
</dbReference>
<dbReference type="InterPro" id="IPR001669">
    <property type="entry name" value="Arg_repress"/>
</dbReference>
<dbReference type="InterPro" id="IPR020899">
    <property type="entry name" value="Arg_repress_C"/>
</dbReference>
<dbReference type="InterPro" id="IPR036251">
    <property type="entry name" value="Arg_repress_C_sf"/>
</dbReference>
<dbReference type="InterPro" id="IPR020900">
    <property type="entry name" value="Arg_repress_DNA-bd"/>
</dbReference>
<dbReference type="InterPro" id="IPR036388">
    <property type="entry name" value="WH-like_DNA-bd_sf"/>
</dbReference>
<dbReference type="InterPro" id="IPR036390">
    <property type="entry name" value="WH_DNA-bd_sf"/>
</dbReference>
<dbReference type="NCBIfam" id="TIGR01529">
    <property type="entry name" value="argR_whole"/>
    <property type="match status" value="1"/>
</dbReference>
<dbReference type="PANTHER" id="PTHR34471">
    <property type="entry name" value="ARGININE REPRESSOR"/>
    <property type="match status" value="1"/>
</dbReference>
<dbReference type="PANTHER" id="PTHR34471:SF1">
    <property type="entry name" value="ARGININE REPRESSOR"/>
    <property type="match status" value="1"/>
</dbReference>
<dbReference type="Pfam" id="PF01316">
    <property type="entry name" value="Arg_repressor"/>
    <property type="match status" value="1"/>
</dbReference>
<dbReference type="Pfam" id="PF02863">
    <property type="entry name" value="Arg_repressor_C"/>
    <property type="match status" value="1"/>
</dbReference>
<dbReference type="PRINTS" id="PR01467">
    <property type="entry name" value="ARGREPRESSOR"/>
</dbReference>
<dbReference type="SUPFAM" id="SSF55252">
    <property type="entry name" value="C-terminal domain of arginine repressor"/>
    <property type="match status" value="1"/>
</dbReference>
<dbReference type="SUPFAM" id="SSF46785">
    <property type="entry name" value="Winged helix' DNA-binding domain"/>
    <property type="match status" value="1"/>
</dbReference>
<accession>Q6HP30</accession>
<feature type="chain" id="PRO_0000205067" description="Arginine regulator">
    <location>
        <begin position="1"/>
        <end position="149"/>
    </location>
</feature>
<keyword id="KW-0056">Arginine metabolism</keyword>
<keyword id="KW-0963">Cytoplasm</keyword>
<keyword id="KW-0238">DNA-binding</keyword>
<keyword id="KW-0804">Transcription</keyword>
<keyword id="KW-0805">Transcription regulation</keyword>
<comment type="function">
    <text evidence="1">Regulates the transcription of the arc operon, involved in arginine catabolism.</text>
</comment>
<comment type="pathway">
    <text>Amino-acid degradation; L-arginine degradation via ADI pathway.</text>
</comment>
<comment type="subcellular location">
    <subcellularLocation>
        <location evidence="1">Cytoplasm</location>
    </subcellularLocation>
</comment>
<comment type="similarity">
    <text evidence="2">Belongs to the ArgR family.</text>
</comment>
<evidence type="ECO:0000250" key="1"/>
<evidence type="ECO:0000305" key="2"/>
<name>ARGR1_BACHK</name>
<sequence>MKKEKRQRLIKQFVKEYEIEKQERLVELLAKKDVLVTQATVSRDIRELNLTKVPSQEGLMIYKIFSEEHLQTDIKLKKKLREVVVKIDCVEQLMVIKTLPGNAHVIGVLFDELDWKEKIGCICGNDTCLIISQSKSDREILEERLNLII</sequence>
<organism>
    <name type="scientific">Bacillus thuringiensis subsp. konkukian (strain 97-27)</name>
    <dbReference type="NCBI Taxonomy" id="281309"/>
    <lineage>
        <taxon>Bacteria</taxon>
        <taxon>Bacillati</taxon>
        <taxon>Bacillota</taxon>
        <taxon>Bacilli</taxon>
        <taxon>Bacillales</taxon>
        <taxon>Bacillaceae</taxon>
        <taxon>Bacillus</taxon>
        <taxon>Bacillus cereus group</taxon>
    </lineage>
</organism>
<protein>
    <recommendedName>
        <fullName>Arginine regulator</fullName>
    </recommendedName>
</protein>
<gene>
    <name type="primary">argR1</name>
    <name type="ordered locus">BT9727_0340</name>
</gene>